<reference key="1">
    <citation type="journal article" date="1994" name="DNA Res.">
        <title>Systematic sequencing of the 180 kilobase region of the Bacillus subtilis chromosome containing the replication origin.</title>
        <authorList>
            <person name="Ogasawara N."/>
            <person name="Nakai S."/>
            <person name="Yoshikawa H."/>
        </authorList>
    </citation>
    <scope>NUCLEOTIDE SEQUENCE [GENOMIC DNA]</scope>
    <source>
        <strain>168</strain>
    </source>
</reference>
<reference key="2">
    <citation type="journal article" date="1997" name="Nature">
        <title>The complete genome sequence of the Gram-positive bacterium Bacillus subtilis.</title>
        <authorList>
            <person name="Kunst F."/>
            <person name="Ogasawara N."/>
            <person name="Moszer I."/>
            <person name="Albertini A.M."/>
            <person name="Alloni G."/>
            <person name="Azevedo V."/>
            <person name="Bertero M.G."/>
            <person name="Bessieres P."/>
            <person name="Bolotin A."/>
            <person name="Borchert S."/>
            <person name="Borriss R."/>
            <person name="Boursier L."/>
            <person name="Brans A."/>
            <person name="Braun M."/>
            <person name="Brignell S.C."/>
            <person name="Bron S."/>
            <person name="Brouillet S."/>
            <person name="Bruschi C.V."/>
            <person name="Caldwell B."/>
            <person name="Capuano V."/>
            <person name="Carter N.M."/>
            <person name="Choi S.-K."/>
            <person name="Codani J.-J."/>
            <person name="Connerton I.F."/>
            <person name="Cummings N.J."/>
            <person name="Daniel R.A."/>
            <person name="Denizot F."/>
            <person name="Devine K.M."/>
            <person name="Duesterhoeft A."/>
            <person name="Ehrlich S.D."/>
            <person name="Emmerson P.T."/>
            <person name="Entian K.-D."/>
            <person name="Errington J."/>
            <person name="Fabret C."/>
            <person name="Ferrari E."/>
            <person name="Foulger D."/>
            <person name="Fritz C."/>
            <person name="Fujita M."/>
            <person name="Fujita Y."/>
            <person name="Fuma S."/>
            <person name="Galizzi A."/>
            <person name="Galleron N."/>
            <person name="Ghim S.-Y."/>
            <person name="Glaser P."/>
            <person name="Goffeau A."/>
            <person name="Golightly E.J."/>
            <person name="Grandi G."/>
            <person name="Guiseppi G."/>
            <person name="Guy B.J."/>
            <person name="Haga K."/>
            <person name="Haiech J."/>
            <person name="Harwood C.R."/>
            <person name="Henaut A."/>
            <person name="Hilbert H."/>
            <person name="Holsappel S."/>
            <person name="Hosono S."/>
            <person name="Hullo M.-F."/>
            <person name="Itaya M."/>
            <person name="Jones L.-M."/>
            <person name="Joris B."/>
            <person name="Karamata D."/>
            <person name="Kasahara Y."/>
            <person name="Klaerr-Blanchard M."/>
            <person name="Klein C."/>
            <person name="Kobayashi Y."/>
            <person name="Koetter P."/>
            <person name="Koningstein G."/>
            <person name="Krogh S."/>
            <person name="Kumano M."/>
            <person name="Kurita K."/>
            <person name="Lapidus A."/>
            <person name="Lardinois S."/>
            <person name="Lauber J."/>
            <person name="Lazarevic V."/>
            <person name="Lee S.-M."/>
            <person name="Levine A."/>
            <person name="Liu H."/>
            <person name="Masuda S."/>
            <person name="Mauel C."/>
            <person name="Medigue C."/>
            <person name="Medina N."/>
            <person name="Mellado R.P."/>
            <person name="Mizuno M."/>
            <person name="Moestl D."/>
            <person name="Nakai S."/>
            <person name="Noback M."/>
            <person name="Noone D."/>
            <person name="O'Reilly M."/>
            <person name="Ogawa K."/>
            <person name="Ogiwara A."/>
            <person name="Oudega B."/>
            <person name="Park S.-H."/>
            <person name="Parro V."/>
            <person name="Pohl T.M."/>
            <person name="Portetelle D."/>
            <person name="Porwollik S."/>
            <person name="Prescott A.M."/>
            <person name="Presecan E."/>
            <person name="Pujic P."/>
            <person name="Purnelle B."/>
            <person name="Rapoport G."/>
            <person name="Rey M."/>
            <person name="Reynolds S."/>
            <person name="Rieger M."/>
            <person name="Rivolta C."/>
            <person name="Rocha E."/>
            <person name="Roche B."/>
            <person name="Rose M."/>
            <person name="Sadaie Y."/>
            <person name="Sato T."/>
            <person name="Scanlan E."/>
            <person name="Schleich S."/>
            <person name="Schroeter R."/>
            <person name="Scoffone F."/>
            <person name="Sekiguchi J."/>
            <person name="Sekowska A."/>
            <person name="Seror S.J."/>
            <person name="Serror P."/>
            <person name="Shin B.-S."/>
            <person name="Soldo B."/>
            <person name="Sorokin A."/>
            <person name="Tacconi E."/>
            <person name="Takagi T."/>
            <person name="Takahashi H."/>
            <person name="Takemaru K."/>
            <person name="Takeuchi M."/>
            <person name="Tamakoshi A."/>
            <person name="Tanaka T."/>
            <person name="Terpstra P."/>
            <person name="Tognoni A."/>
            <person name="Tosato V."/>
            <person name="Uchiyama S."/>
            <person name="Vandenbol M."/>
            <person name="Vannier F."/>
            <person name="Vassarotti A."/>
            <person name="Viari A."/>
            <person name="Wambutt R."/>
            <person name="Wedler E."/>
            <person name="Wedler H."/>
            <person name="Weitzenegger T."/>
            <person name="Winters P."/>
            <person name="Wipat A."/>
            <person name="Yamamoto H."/>
            <person name="Yamane K."/>
            <person name="Yasumoto K."/>
            <person name="Yata K."/>
            <person name="Yoshida K."/>
            <person name="Yoshikawa H.-F."/>
            <person name="Zumstein E."/>
            <person name="Yoshikawa H."/>
            <person name="Danchin A."/>
        </authorList>
    </citation>
    <scope>NUCLEOTIDE SEQUENCE [LARGE SCALE GENOMIC DNA]</scope>
    <source>
        <strain>168</strain>
    </source>
</reference>
<reference key="3">
    <citation type="journal article" date="2001" name="J. Biol. Chem.">
        <title>Deoxynucleoside kinases encoded by the yaaG and yaaF genes of Bacillus subtilis. Substrate specificity and kinetic analysis of deoxyguanosine kinase with UTP as the preferred phosphate donor.</title>
        <authorList>
            <person name="Andersen R.B."/>
            <person name="Neuhard J."/>
        </authorList>
    </citation>
    <scope>FUNCTION</scope>
    <scope>MASS SPECTROMETRY</scope>
    <scope>BIOPHYSICOCHEMICAL PROPERTIES</scope>
    <scope>SUBSTRATE SPECIFICITY</scope>
    <scope>ACTIVITY REGULATION</scope>
    <scope>NOMENCLATURE</scope>
    <scope>SUBUNIT</scope>
</reference>
<protein>
    <recommendedName>
        <fullName>Deoxyguanosine kinase</fullName>
        <shortName>DGUO kinase</shortName>
        <shortName>dGK</shortName>
        <ecNumber>2.7.1.113</ecNumber>
    </recommendedName>
</protein>
<sequence>MNTAPFIAIEGPIGAGKTTLATMLSQKFGFPMINEIVEDNPYLDKFYDNIKEWSFQLEMFFLCHRYKQLEDTSDHFLKKGQPVIADYHIYKNVIFAERTLSPHQLEKYKKIYHLLTDDLPKPNFIIYIKASLPTLLHRIEKRGRPFEKKIETSYLEQLISDYEVAIKQLQEADPELTVLTVDGDSKDFVLNKSDFERIAAHVKELIV</sequence>
<feature type="chain" id="PRO_0000049431" description="Deoxyguanosine kinase">
    <location>
        <begin position="1"/>
        <end position="207"/>
    </location>
</feature>
<feature type="active site" description="Proton acceptor" evidence="2">
    <location>
        <position position="86"/>
    </location>
</feature>
<feature type="binding site" evidence="1">
    <location>
        <begin position="11"/>
        <end position="19"/>
    </location>
    <ligand>
        <name>ATP</name>
        <dbReference type="ChEBI" id="CHEBI:30616"/>
    </ligand>
</feature>
<feature type="binding site" evidence="1">
    <location>
        <position position="35"/>
    </location>
    <ligand>
        <name>substrate</name>
    </ligand>
</feature>
<feature type="binding site" evidence="1">
    <location>
        <position position="47"/>
    </location>
    <ligand>
        <name>substrate</name>
    </ligand>
</feature>
<feature type="binding site" evidence="1">
    <location>
        <position position="147"/>
    </location>
    <ligand>
        <name>substrate</name>
    </ligand>
</feature>
<dbReference type="EC" id="2.7.1.113"/>
<dbReference type="EMBL" id="D26185">
    <property type="protein sequence ID" value="BAA05251.1"/>
    <property type="molecule type" value="Genomic_DNA"/>
</dbReference>
<dbReference type="EMBL" id="AL009126">
    <property type="protein sequence ID" value="CAB11791.1"/>
    <property type="molecule type" value="Genomic_DNA"/>
</dbReference>
<dbReference type="PIR" id="S66045">
    <property type="entry name" value="S66045"/>
</dbReference>
<dbReference type="RefSeq" id="NP_387896.1">
    <property type="nucleotide sequence ID" value="NC_000964.3"/>
</dbReference>
<dbReference type="RefSeq" id="WP_003247138.1">
    <property type="nucleotide sequence ID" value="NZ_OZ025638.1"/>
</dbReference>
<dbReference type="SMR" id="P37530"/>
<dbReference type="FunCoup" id="P37530">
    <property type="interactions" value="432"/>
</dbReference>
<dbReference type="STRING" id="224308.BSU00150"/>
<dbReference type="PaxDb" id="224308-BSU00150"/>
<dbReference type="EnsemblBacteria" id="CAB11791">
    <property type="protein sequence ID" value="CAB11791"/>
    <property type="gene ID" value="BSU_00150"/>
</dbReference>
<dbReference type="GeneID" id="937037"/>
<dbReference type="KEGG" id="bsu:BSU00150"/>
<dbReference type="PATRIC" id="fig|224308.179.peg.15"/>
<dbReference type="eggNOG" id="COG1428">
    <property type="taxonomic scope" value="Bacteria"/>
</dbReference>
<dbReference type="InParanoid" id="P37530"/>
<dbReference type="OrthoDB" id="9776634at2"/>
<dbReference type="PhylomeDB" id="P37530"/>
<dbReference type="BioCyc" id="BSUB:BSU00150-MONOMER"/>
<dbReference type="BRENDA" id="2.7.1.113">
    <property type="organism ID" value="658"/>
</dbReference>
<dbReference type="SABIO-RK" id="P37530"/>
<dbReference type="Proteomes" id="UP000001570">
    <property type="component" value="Chromosome"/>
</dbReference>
<dbReference type="GO" id="GO:0005737">
    <property type="term" value="C:cytoplasm"/>
    <property type="evidence" value="ECO:0000318"/>
    <property type="project" value="GO_Central"/>
</dbReference>
<dbReference type="GO" id="GO:0005524">
    <property type="term" value="F:ATP binding"/>
    <property type="evidence" value="ECO:0007669"/>
    <property type="project" value="UniProtKB-KW"/>
</dbReference>
<dbReference type="GO" id="GO:0004138">
    <property type="term" value="F:deoxyguanosine kinase activity"/>
    <property type="evidence" value="ECO:0007669"/>
    <property type="project" value="UniProtKB-EC"/>
</dbReference>
<dbReference type="GO" id="GO:0019136">
    <property type="term" value="F:deoxynucleoside kinase activity"/>
    <property type="evidence" value="ECO:0000318"/>
    <property type="project" value="GO_Central"/>
</dbReference>
<dbReference type="CDD" id="cd01673">
    <property type="entry name" value="dNK"/>
    <property type="match status" value="1"/>
</dbReference>
<dbReference type="FunFam" id="3.40.50.300:FF:000659">
    <property type="entry name" value="Deoxyguanosine kinase"/>
    <property type="match status" value="1"/>
</dbReference>
<dbReference type="Gene3D" id="3.40.50.300">
    <property type="entry name" value="P-loop containing nucleotide triphosphate hydrolases"/>
    <property type="match status" value="1"/>
</dbReference>
<dbReference type="InterPro" id="IPR002624">
    <property type="entry name" value="DCK/DGK"/>
</dbReference>
<dbReference type="InterPro" id="IPR050566">
    <property type="entry name" value="Deoxyribonucleoside_kinase"/>
</dbReference>
<dbReference type="InterPro" id="IPR031314">
    <property type="entry name" value="DNK_dom"/>
</dbReference>
<dbReference type="InterPro" id="IPR027417">
    <property type="entry name" value="P-loop_NTPase"/>
</dbReference>
<dbReference type="PANTHER" id="PTHR10513:SF46">
    <property type="entry name" value="DEOXYGUANOSINE KINASE"/>
    <property type="match status" value="1"/>
</dbReference>
<dbReference type="PANTHER" id="PTHR10513">
    <property type="entry name" value="DEOXYNUCLEOSIDE KINASE"/>
    <property type="match status" value="1"/>
</dbReference>
<dbReference type="Pfam" id="PF01712">
    <property type="entry name" value="dNK"/>
    <property type="match status" value="1"/>
</dbReference>
<dbReference type="PIRSF" id="PIRSF000705">
    <property type="entry name" value="DNK"/>
    <property type="match status" value="1"/>
</dbReference>
<dbReference type="SUPFAM" id="SSF52540">
    <property type="entry name" value="P-loop containing nucleoside triphosphate hydrolases"/>
    <property type="match status" value="1"/>
</dbReference>
<accession>P37530</accession>
<organism>
    <name type="scientific">Bacillus subtilis (strain 168)</name>
    <dbReference type="NCBI Taxonomy" id="224308"/>
    <lineage>
        <taxon>Bacteria</taxon>
        <taxon>Bacillati</taxon>
        <taxon>Bacillota</taxon>
        <taxon>Bacilli</taxon>
        <taxon>Bacillales</taxon>
        <taxon>Bacillaceae</taxon>
        <taxon>Bacillus</taxon>
    </lineage>
</organism>
<name>DGK_BACSU</name>
<keyword id="KW-0067">ATP-binding</keyword>
<keyword id="KW-0418">Kinase</keyword>
<keyword id="KW-0547">Nucleotide-binding</keyword>
<keyword id="KW-1185">Reference proteome</keyword>
<keyword id="KW-0808">Transferase</keyword>
<gene>
    <name type="primary">dgk</name>
    <name type="synonym">yaaG</name>
    <name type="ordered locus">BSU00150</name>
</gene>
<proteinExistence type="evidence at protein level"/>
<evidence type="ECO:0000250" key="1"/>
<evidence type="ECO:0000255" key="2"/>
<evidence type="ECO:0000269" key="3">
    <source>
    </source>
</evidence>
<evidence type="ECO:0000305" key="4"/>
<comment type="function">
    <text evidence="3">Plays an essential role in generating the deoxyribonucleotide precursors dGTP for DNA metabolism. Highly specific toward deoxyguanosine (dGuo) and deoxyinosine (dIno). Only marginal activity is observed with guanosine. UTP is slightly more efficient as phosphate donor than CTP, ATP and GTP.</text>
</comment>
<comment type="catalytic activity">
    <reaction>
        <text>2'-deoxyguanosine + ATP = dGMP + ADP + H(+)</text>
        <dbReference type="Rhea" id="RHEA:19201"/>
        <dbReference type="ChEBI" id="CHEBI:15378"/>
        <dbReference type="ChEBI" id="CHEBI:17172"/>
        <dbReference type="ChEBI" id="CHEBI:30616"/>
        <dbReference type="ChEBI" id="CHEBI:57673"/>
        <dbReference type="ChEBI" id="CHEBI:456216"/>
        <dbReference type="EC" id="2.7.1.113"/>
    </reaction>
</comment>
<comment type="activity regulation">
    <text evidence="3">Inhibited by deoxyguanosine at concentrations above 30 uM only with UTP as phosphate donor. dGTP is a potent competitive inhibitor.</text>
</comment>
<comment type="biophysicochemical properties">
    <kinetics>
        <KM evidence="3">0.6 uM for deoxyguanosine (with UTP at pH 7.8 and at 37 degrees Celsius)</KM>
        <KM evidence="3">1.7 uM for deoxyguanosine (with CTP at pH 7.8 and at 37 degrees Celsius)</KM>
        <KM evidence="3">6.5 uM for deoxyguanosine (with ATP at pH 7.8 and at 37 degrees Celsius)</KM>
        <KM evidence="3">10.4 uM for deoxyguanosine (with GTP at pH 7.8 and at 37 degrees Celsius)</KM>
        <KM evidence="3">6 uM for UTP (with deoxyguanosine at pH 7.8 and at 37 degrees Celsius)</KM>
        <KM evidence="3">35 uM for CTP (with deoxyguanosine at pH 7.8 and at 37 degrees Celsius)</KM>
        <KM evidence="3">36 uM for ATP (with deoxyguanosine at pH 7.8 and at 37 degrees Celsius)</KM>
        <KM evidence="3">46 uM for GTP (with deoxyguanosine at pH 7.8 and at 37 degrees Celsius)</KM>
        <Vmax evidence="3">8.1 umol/min/mg enzyme toward deoxyguanosine (with 0.5 mM UTP at pH 7.8 and at 37 degrees Celsius)</Vmax>
    </kinetics>
    <phDependence>
        <text evidence="3">Optimum pH is around pH 9 (with saturating concentrations of dGuo and UTP). At pH 7.5 and 11.5 more than 80% of maximal activity is still observed. At pH 6.0, 60% activity remains, whereas the enzyme is completely inactive below pH 5.6.</text>
    </phDependence>
</comment>
<comment type="subunit">
    <text evidence="3">Homodimer.</text>
</comment>
<comment type="mass spectrometry"/>
<comment type="miscellaneous">
    <text>Catalysis proceeds by a classical ping-pong bi-bi reaction mechanism.</text>
</comment>
<comment type="similarity">
    <text evidence="4">Belongs to the DCK/DGK family.</text>
</comment>